<reference key="1">
    <citation type="submission" date="2007-05" db="EMBL/GenBank/DDBJ databases">
        <title>Complete sequence of Pseudomonas putida F1.</title>
        <authorList>
            <consortium name="US DOE Joint Genome Institute"/>
            <person name="Copeland A."/>
            <person name="Lucas S."/>
            <person name="Lapidus A."/>
            <person name="Barry K."/>
            <person name="Detter J.C."/>
            <person name="Glavina del Rio T."/>
            <person name="Hammon N."/>
            <person name="Israni S."/>
            <person name="Dalin E."/>
            <person name="Tice H."/>
            <person name="Pitluck S."/>
            <person name="Chain P."/>
            <person name="Malfatti S."/>
            <person name="Shin M."/>
            <person name="Vergez L."/>
            <person name="Schmutz J."/>
            <person name="Larimer F."/>
            <person name="Land M."/>
            <person name="Hauser L."/>
            <person name="Kyrpides N."/>
            <person name="Lykidis A."/>
            <person name="Parales R."/>
            <person name="Richardson P."/>
        </authorList>
    </citation>
    <scope>NUCLEOTIDE SEQUENCE [LARGE SCALE GENOMIC DNA]</scope>
    <source>
        <strain>ATCC 700007 / DSM 6899 / JCM 31910 / BCRC 17059 / LMG 24140 / F1</strain>
    </source>
</reference>
<sequence length="449" mass="47922">MIHGKTLEAWQQSHPIIAELVALKPTSWFNPGIAKAAEALHDVGLTAADVQAASARLLRFAPYLATVFPETAAAGGVIESPVIPLPQLRRVLVEEGSLQNAGSLWLKADSDLPISGSIKARGGIHEVLKHAEDLALAAGLITPTDDYTKLASDQARAFFSQYTIAVGSTGNLGLSIGIMSAKLGFQVSVHMSSDARQWKKDKLRANGVTVVEHASDYSVAVEQGRQQAASDPRCYFVDDENSPQLFLGYAVAAERLARQFDQAGIQVNADHPLFVYLPCGVGGGPGGVAFGLKLVFGDAVHCIFAEPTHSPCMLLGVYTGLHDETSVQDFGIDNITAADGLAVGRPSGFVGKAMQRLIDGYYTVADEELYRLMVIAHEQDKVKLEPSALAGVPGMLRVLQAGEYLARQGFTPTQLQQATHLVWGTGGSMVPDDEFNTYLAKGRSLQANV</sequence>
<protein>
    <recommendedName>
        <fullName evidence="1">Probable D-serine dehydratase</fullName>
        <ecNumber evidence="1">4.3.1.18</ecNumber>
    </recommendedName>
    <alternativeName>
        <fullName evidence="1">D-serine deaminase</fullName>
        <shortName evidence="1">DSD</shortName>
    </alternativeName>
</protein>
<gene>
    <name evidence="1" type="primary">dsdA</name>
    <name type="ordered locus">Pput_3070</name>
</gene>
<name>SDHD_PSEP1</name>
<comment type="catalytic activity">
    <reaction evidence="1">
        <text>D-serine = pyruvate + NH4(+)</text>
        <dbReference type="Rhea" id="RHEA:13977"/>
        <dbReference type="ChEBI" id="CHEBI:15361"/>
        <dbReference type="ChEBI" id="CHEBI:28938"/>
        <dbReference type="ChEBI" id="CHEBI:35247"/>
        <dbReference type="EC" id="4.3.1.18"/>
    </reaction>
</comment>
<comment type="cofactor">
    <cofactor evidence="1">
        <name>pyridoxal 5'-phosphate</name>
        <dbReference type="ChEBI" id="CHEBI:597326"/>
    </cofactor>
</comment>
<comment type="similarity">
    <text evidence="1">Belongs to the serine/threonine dehydratase family. DsdA subfamily.</text>
</comment>
<feature type="chain" id="PRO_1000063715" description="Probable D-serine dehydratase">
    <location>
        <begin position="1"/>
        <end position="449"/>
    </location>
</feature>
<feature type="modified residue" description="N6-(pyridoxal phosphate)lysine" evidence="1">
    <location>
        <position position="119"/>
    </location>
</feature>
<accession>A5W4Y8</accession>
<keyword id="KW-0456">Lyase</keyword>
<keyword id="KW-0663">Pyridoxal phosphate</keyword>
<organism>
    <name type="scientific">Pseudomonas putida (strain ATCC 700007 / DSM 6899 / JCM 31910 / BCRC 17059 / LMG 24140 / F1)</name>
    <dbReference type="NCBI Taxonomy" id="351746"/>
    <lineage>
        <taxon>Bacteria</taxon>
        <taxon>Pseudomonadati</taxon>
        <taxon>Pseudomonadota</taxon>
        <taxon>Gammaproteobacteria</taxon>
        <taxon>Pseudomonadales</taxon>
        <taxon>Pseudomonadaceae</taxon>
        <taxon>Pseudomonas</taxon>
    </lineage>
</organism>
<proteinExistence type="inferred from homology"/>
<evidence type="ECO:0000255" key="1">
    <source>
        <dbReference type="HAMAP-Rule" id="MF_01030"/>
    </source>
</evidence>
<dbReference type="EC" id="4.3.1.18" evidence="1"/>
<dbReference type="EMBL" id="CP000712">
    <property type="protein sequence ID" value="ABQ79198.1"/>
    <property type="molecule type" value="Genomic_DNA"/>
</dbReference>
<dbReference type="SMR" id="A5W4Y8"/>
<dbReference type="KEGG" id="ppf:Pput_3070"/>
<dbReference type="eggNOG" id="COG3048">
    <property type="taxonomic scope" value="Bacteria"/>
</dbReference>
<dbReference type="HOGENOM" id="CLU_035707_0_0_6"/>
<dbReference type="GO" id="GO:0008721">
    <property type="term" value="F:D-serine ammonia-lyase activity"/>
    <property type="evidence" value="ECO:0007669"/>
    <property type="project" value="UniProtKB-EC"/>
</dbReference>
<dbReference type="GO" id="GO:0016836">
    <property type="term" value="F:hydro-lyase activity"/>
    <property type="evidence" value="ECO:0007669"/>
    <property type="project" value="UniProtKB-UniRule"/>
</dbReference>
<dbReference type="GO" id="GO:0030170">
    <property type="term" value="F:pyridoxal phosphate binding"/>
    <property type="evidence" value="ECO:0007669"/>
    <property type="project" value="InterPro"/>
</dbReference>
<dbReference type="GO" id="GO:0036088">
    <property type="term" value="P:D-serine catabolic process"/>
    <property type="evidence" value="ECO:0007669"/>
    <property type="project" value="TreeGrafter"/>
</dbReference>
<dbReference type="GO" id="GO:0009097">
    <property type="term" value="P:isoleucine biosynthetic process"/>
    <property type="evidence" value="ECO:0007669"/>
    <property type="project" value="TreeGrafter"/>
</dbReference>
<dbReference type="Gene3D" id="3.40.50.1100">
    <property type="match status" value="2"/>
</dbReference>
<dbReference type="HAMAP" id="MF_01030">
    <property type="entry name" value="D_Ser_dehydrat"/>
    <property type="match status" value="1"/>
</dbReference>
<dbReference type="InterPro" id="IPR011780">
    <property type="entry name" value="D_Ser_am_lyase"/>
</dbReference>
<dbReference type="InterPro" id="IPR050147">
    <property type="entry name" value="Ser/Thr_Dehydratase"/>
</dbReference>
<dbReference type="InterPro" id="IPR000634">
    <property type="entry name" value="Ser/Thr_deHydtase_PyrdxlP-BS"/>
</dbReference>
<dbReference type="InterPro" id="IPR001926">
    <property type="entry name" value="TrpB-like_PALP"/>
</dbReference>
<dbReference type="InterPro" id="IPR036052">
    <property type="entry name" value="TrpB-like_PALP_sf"/>
</dbReference>
<dbReference type="NCBIfam" id="TIGR02035">
    <property type="entry name" value="D_Ser_am_lyase"/>
    <property type="match status" value="1"/>
</dbReference>
<dbReference type="NCBIfam" id="NF002823">
    <property type="entry name" value="PRK02991.1"/>
    <property type="match status" value="1"/>
</dbReference>
<dbReference type="PANTHER" id="PTHR48078:SF9">
    <property type="entry name" value="D-SERINE DEHYDRATASE"/>
    <property type="match status" value="1"/>
</dbReference>
<dbReference type="PANTHER" id="PTHR48078">
    <property type="entry name" value="THREONINE DEHYDRATASE, MITOCHONDRIAL-RELATED"/>
    <property type="match status" value="1"/>
</dbReference>
<dbReference type="Pfam" id="PF00291">
    <property type="entry name" value="PALP"/>
    <property type="match status" value="1"/>
</dbReference>
<dbReference type="SUPFAM" id="SSF53686">
    <property type="entry name" value="Tryptophan synthase beta subunit-like PLP-dependent enzymes"/>
    <property type="match status" value="1"/>
</dbReference>
<dbReference type="PROSITE" id="PS00165">
    <property type="entry name" value="DEHYDRATASE_SER_THR"/>
    <property type="match status" value="1"/>
</dbReference>